<reference key="1">
    <citation type="journal article" date="1995" name="J. Eukaryot. Microbiol.">
        <title>Preliminary characterisation of chlorarachniophyte mitochondrial DNA.</title>
        <authorList>
            <person name="Gilson R."/>
            <person name="Waller R.F."/>
            <person name="McFadden G.I."/>
        </authorList>
    </citation>
    <scope>NUCLEOTIDE SEQUENCE [GENOMIC DNA]</scope>
</reference>
<organism>
    <name type="scientific">Bigelowiella natans</name>
    <name type="common">Pedinomonas minutissima</name>
    <name type="synonym">Chlorarachnion sp. (strain CCMP621)</name>
    <dbReference type="NCBI Taxonomy" id="227086"/>
    <lineage>
        <taxon>Eukaryota</taxon>
        <taxon>Sar</taxon>
        <taxon>Rhizaria</taxon>
        <taxon>Cercozoa</taxon>
        <taxon>Chlorarachniophyceae</taxon>
        <taxon>Bigelowiella</taxon>
    </lineage>
</organism>
<gene>
    <name type="primary">RPS14</name>
</gene>
<name>RT14_BIGNA</name>
<comment type="subcellular location">
    <subcellularLocation>
        <location>Mitochondrion</location>
    </subcellularLocation>
</comment>
<comment type="similarity">
    <text evidence="1">Belongs to the universal ribosomal protein uS14 family.</text>
</comment>
<protein>
    <recommendedName>
        <fullName evidence="1">Small ribosomal subunit protein uS14m</fullName>
    </recommendedName>
    <alternativeName>
        <fullName>Ribosomal protein S14, mitochondrial</fullName>
    </alternativeName>
</protein>
<keyword id="KW-0496">Mitochondrion</keyword>
<keyword id="KW-0687">Ribonucleoprotein</keyword>
<keyword id="KW-0689">Ribosomal protein</keyword>
<sequence>SLRLALICPGLLPIRNICVATSRSRGVFRKYKLSRIMLRDMGLQGLLPGFKKR</sequence>
<proteinExistence type="inferred from homology"/>
<evidence type="ECO:0000305" key="1"/>
<geneLocation type="mitochondrion"/>
<feature type="chain" id="PRO_0000131004" description="Small ribosomal subunit protein uS14m">
    <location>
        <begin position="1" status="less than"/>
        <end position="53"/>
    </location>
</feature>
<feature type="non-terminal residue">
    <location>
        <position position="1"/>
    </location>
</feature>
<dbReference type="EMBL" id="U36908">
    <property type="protein sequence ID" value="AAD05574.1"/>
    <property type="molecule type" value="Genomic_DNA"/>
</dbReference>
<dbReference type="SMR" id="P48945"/>
<dbReference type="GO" id="GO:0005739">
    <property type="term" value="C:mitochondrion"/>
    <property type="evidence" value="ECO:0007669"/>
    <property type="project" value="UniProtKB-SubCell"/>
</dbReference>
<dbReference type="GO" id="GO:1990904">
    <property type="term" value="C:ribonucleoprotein complex"/>
    <property type="evidence" value="ECO:0007669"/>
    <property type="project" value="UniProtKB-KW"/>
</dbReference>
<dbReference type="GO" id="GO:0005840">
    <property type="term" value="C:ribosome"/>
    <property type="evidence" value="ECO:0007669"/>
    <property type="project" value="UniProtKB-KW"/>
</dbReference>
<dbReference type="GO" id="GO:0003735">
    <property type="term" value="F:structural constituent of ribosome"/>
    <property type="evidence" value="ECO:0007669"/>
    <property type="project" value="InterPro"/>
</dbReference>
<dbReference type="GO" id="GO:0006412">
    <property type="term" value="P:translation"/>
    <property type="evidence" value="ECO:0007669"/>
    <property type="project" value="InterPro"/>
</dbReference>
<dbReference type="Gene3D" id="4.10.830.10">
    <property type="entry name" value="30s Ribosomal Protein S14, Chain N"/>
    <property type="match status" value="1"/>
</dbReference>
<dbReference type="InterPro" id="IPR001209">
    <property type="entry name" value="Ribosomal_uS14"/>
</dbReference>
<dbReference type="InterPro" id="IPR043140">
    <property type="entry name" value="Ribosomal_uS14_sf"/>
</dbReference>
<dbReference type="Pfam" id="PF00253">
    <property type="entry name" value="Ribosomal_S14"/>
    <property type="match status" value="1"/>
</dbReference>
<dbReference type="SUPFAM" id="SSF57716">
    <property type="entry name" value="Glucocorticoid receptor-like (DNA-binding domain)"/>
    <property type="match status" value="1"/>
</dbReference>
<accession>P48945</accession>